<organism>
    <name type="scientific">Fowlpox virus (strain NVSL)</name>
    <name type="common">FPV</name>
    <dbReference type="NCBI Taxonomy" id="928301"/>
    <lineage>
        <taxon>Viruses</taxon>
        <taxon>Varidnaviria</taxon>
        <taxon>Bamfordvirae</taxon>
        <taxon>Nucleocytoviricota</taxon>
        <taxon>Pokkesviricetes</taxon>
        <taxon>Chitovirales</taxon>
        <taxon>Poxviridae</taxon>
        <taxon>Chordopoxvirinae</taxon>
        <taxon>Avipoxvirus</taxon>
        <taxon>Fowlpox virus</taxon>
    </lineage>
</organism>
<proteinExistence type="inferred from homology"/>
<comment type="function">
    <text evidence="1">FAD-dependent sulfhydryl oxidase that catalyzes disulfide bond formation.</text>
</comment>
<comment type="catalytic activity">
    <reaction>
        <text>2 R'C(R)SH + O2 = R'C(R)S-S(R)CR' + H2O2</text>
        <dbReference type="Rhea" id="RHEA:17357"/>
        <dbReference type="ChEBI" id="CHEBI:15379"/>
        <dbReference type="ChEBI" id="CHEBI:16240"/>
        <dbReference type="ChEBI" id="CHEBI:16520"/>
        <dbReference type="ChEBI" id="CHEBI:17412"/>
        <dbReference type="EC" id="1.8.3.2"/>
    </reaction>
</comment>
<comment type="cofactor">
    <cofactor evidence="1">
        <name>FAD</name>
        <dbReference type="ChEBI" id="CHEBI:57692"/>
    </cofactor>
</comment>
<comment type="similarity">
    <text evidence="2">Belongs to the poxviruses E10 family.</text>
</comment>
<reference key="1">
    <citation type="journal article" date="1998" name="Virus Genes">
        <title>Nucleotide sequence of the 4.3 kbp BamHI-N fragment of fowlpox virus FP9.</title>
        <authorList>
            <person name="Pollitt E."/>
            <person name="Skinner M.A."/>
            <person name="Heaphy S."/>
        </authorList>
    </citation>
    <scope>NUCLEOTIDE SEQUENCE [GENOMIC DNA]</scope>
    <source>
        <strain>FP-9 / Isolate HP-440</strain>
    </source>
</reference>
<reference key="2">
    <citation type="journal article" date="2000" name="J. Virol.">
        <title>The genome of fowlpox virus.</title>
        <authorList>
            <person name="Afonso C.L."/>
            <person name="Tulman E.R."/>
            <person name="Lu Z."/>
            <person name="Zsak L."/>
            <person name="Kutish G.F."/>
            <person name="Rock D.L."/>
        </authorList>
    </citation>
    <scope>NUCLEOTIDE SEQUENCE [LARGE SCALE GENOMIC DNA]</scope>
</reference>
<name>V093_FOWPN</name>
<organismHost>
    <name type="scientific">Vertebrata</name>
    <dbReference type="NCBI Taxonomy" id="7742"/>
</organismHost>
<keyword id="KW-1015">Disulfide bond</keyword>
<keyword id="KW-0274">FAD</keyword>
<keyword id="KW-0285">Flavoprotein</keyword>
<keyword id="KW-0560">Oxidoreductase</keyword>
<keyword id="KW-1185">Reference proteome</keyword>
<feature type="chain" id="PRO_0000099467" description="Probable FAD-linked sulfhydryl oxidase FPV093">
    <location>
        <begin position="1"/>
        <end position="94"/>
    </location>
</feature>
<feature type="domain" description="ERV/ALR sulfhydryl oxidase" evidence="1">
    <location>
        <begin position="1"/>
        <end position="94"/>
    </location>
</feature>
<feature type="disulfide bond" description="Redox-active" evidence="1">
    <location>
        <begin position="41"/>
        <end position="44"/>
    </location>
</feature>
<feature type="sequence conflict" description="In Ref. 1; CAA11288." evidence="2" ref="1">
    <original>S</original>
    <variation>R</variation>
    <location>
        <position position="8"/>
    </location>
</feature>
<feature type="sequence conflict" description="In Ref. 1; CAA11288." evidence="2" ref="1">
    <original>W</original>
    <variation>G</variation>
    <location>
        <position position="11"/>
    </location>
</feature>
<feature type="sequence conflict" description="In Ref. 1; CAA11288." evidence="2" ref="1">
    <original>C</original>
    <variation>R</variation>
    <location>
        <position position="41"/>
    </location>
</feature>
<feature type="sequence conflict" description="In Ref. 1; CAA11288." evidence="2" ref="1">
    <original>FF</original>
    <variation>SS</variation>
    <location>
        <begin position="68"/>
        <end position="69"/>
    </location>
</feature>
<protein>
    <recommendedName>
        <fullName>Probable FAD-linked sulfhydryl oxidase FPV093</fullName>
        <ecNumber>1.8.3.2</ecNumber>
    </recommendedName>
</protein>
<gene>
    <name type="ordered locus">FPV093</name>
    <name type="ORF">FPE10R</name>
</gene>
<evidence type="ECO:0000255" key="1">
    <source>
        <dbReference type="PROSITE-ProRule" id="PRU00654"/>
    </source>
</evidence>
<evidence type="ECO:0000305" key="2"/>
<dbReference type="EC" id="1.8.3.2"/>
<dbReference type="EMBL" id="AJ223385">
    <property type="protein sequence ID" value="CAA11288.1"/>
    <property type="molecule type" value="Genomic_DNA"/>
</dbReference>
<dbReference type="EMBL" id="AF198100">
    <property type="protein sequence ID" value="AAF44437.1"/>
    <property type="molecule type" value="Genomic_DNA"/>
</dbReference>
<dbReference type="RefSeq" id="NP_039056.1">
    <property type="nucleotide sequence ID" value="NC_002188.1"/>
</dbReference>
<dbReference type="SMR" id="Q9J5C7"/>
<dbReference type="GeneID" id="1486641"/>
<dbReference type="KEGG" id="vg:1486641"/>
<dbReference type="Proteomes" id="UP000008597">
    <property type="component" value="Segment"/>
</dbReference>
<dbReference type="GO" id="GO:0016972">
    <property type="term" value="F:thiol oxidase activity"/>
    <property type="evidence" value="ECO:0007669"/>
    <property type="project" value="UniProtKB-EC"/>
</dbReference>
<dbReference type="Gene3D" id="1.20.120.310">
    <property type="entry name" value="ERV/ALR sulfhydryl oxidase domain"/>
    <property type="match status" value="1"/>
</dbReference>
<dbReference type="InterPro" id="IPR036774">
    <property type="entry name" value="ERV/ALR_sulphydryl_oxid_sf"/>
</dbReference>
<dbReference type="InterPro" id="IPR017905">
    <property type="entry name" value="ERV/ALR_sulphydryl_oxidase"/>
</dbReference>
<dbReference type="InterPro" id="IPR006890">
    <property type="entry name" value="Sulphydryl_Oase_FAD-link_ERV1"/>
</dbReference>
<dbReference type="Pfam" id="PF04805">
    <property type="entry name" value="Pox_E10"/>
    <property type="match status" value="1"/>
</dbReference>
<dbReference type="PIRSF" id="PIRSF015696">
    <property type="entry name" value="VAC_E10R"/>
    <property type="match status" value="1"/>
</dbReference>
<dbReference type="SUPFAM" id="SSF69000">
    <property type="entry name" value="FAD-dependent thiol oxidase"/>
    <property type="match status" value="1"/>
</dbReference>
<dbReference type="PROSITE" id="PS51324">
    <property type="entry name" value="ERV_ALR"/>
    <property type="match status" value="1"/>
</dbReference>
<sequence length="94" mass="11252">MDPRYWGSSFWIVIFIIITKFKHDIETCKRHLYNICKALPCAECKDHALQAIQKNNIMSSNDINYIYFFFISLYNNLVFNPERCIDIKKVKKLI</sequence>
<accession>Q9J5C7</accession>
<accession>O72895</accession>